<comment type="function">
    <text evidence="5 6 9 15">Component of the PEX1-PEX6 AAA ATPase complex, a protein dislocase complex that mediates the ATP-dependent extraction of the PEX5 receptor from peroxisomal membranes, an essential step for PEX5 recycling (PubMed:16314507, PubMed:16854980, PubMed:21362118, PubMed:29884772). Specifically recognizes PEX5 monoubiquitinated at 'Cys-11', and pulls it out of the peroxisome lumen through the PEX2-PEX10-PEX12 retrotranslocation channel (PubMed:29884772). Extraction by the PEX1-PEX6 AAA ATPase complex is accompanied by unfolding of the TPR repeats and release of bound cargo from PEX5 (PubMed:29884772).</text>
</comment>
<comment type="catalytic activity">
    <reaction evidence="6">
        <text>ATP + H2O = ADP + phosphate + H(+)</text>
        <dbReference type="Rhea" id="RHEA:13065"/>
        <dbReference type="ChEBI" id="CHEBI:15377"/>
        <dbReference type="ChEBI" id="CHEBI:15378"/>
        <dbReference type="ChEBI" id="CHEBI:30616"/>
        <dbReference type="ChEBI" id="CHEBI:43474"/>
        <dbReference type="ChEBI" id="CHEBI:456216"/>
    </reaction>
    <physiologicalReaction direction="left-to-right" evidence="6">
        <dbReference type="Rhea" id="RHEA:13066"/>
    </physiologicalReaction>
</comment>
<comment type="subunit">
    <text evidence="4 6 9 11">Interacts with PEX1; forming the PEX1-PEX6 AAA ATPase complex, which is composed of a heterohexamer formed by a trimer of PEX1-PEX6 dimers (PubMed:12717447, PubMed:16854980, PubMed:21362118). Interacts with PEX26; interaction is direct and promotes recruitment to peroxisomal membranes (PubMed:12717447, PubMed:16854980). Interacts with ZFAND6 (PubMed:21980954).</text>
</comment>
<comment type="interaction">
    <interactant intactId="EBI-988581">
        <id>Q13608</id>
    </interactant>
    <interactant intactId="EBI-988601">
        <id>O43933</id>
        <label>PEX1</label>
    </interactant>
    <organismsDiffer>false</organismsDiffer>
    <experiments>2</experiments>
</comment>
<comment type="subcellular location">
    <subcellularLocation>
        <location evidence="6">Cytoplasm</location>
        <location evidence="6">Cytosol</location>
    </subcellularLocation>
    <subcellularLocation>
        <location evidence="3 4 6 9">Peroxisome membrane</location>
    </subcellularLocation>
    <subcellularLocation>
        <location evidence="13">Cell projection</location>
        <location evidence="13">Cilium</location>
        <location evidence="13">Photoreceptor outer segment</location>
    </subcellularLocation>
    <text evidence="4 6 13">Associated with peroxisomal membranes; anchored by PEX26 to peroxisome membranes (PubMed:12717447, PubMed:16854980). Localized at the base of the outer segment of photoreceptor cells (PubMed:26593283).</text>
</comment>
<comment type="alternative products">
    <event type="alternative splicing"/>
    <isoform>
        <id>Q13608-1</id>
        <name>1</name>
        <sequence type="displayed"/>
    </isoform>
    <isoform>
        <id>Q13608-2</id>
        <name>2</name>
        <sequence type="described" ref="VSP_057138 VSP_057139"/>
    </isoform>
    <isoform>
        <id>Q13608-3</id>
        <name>3</name>
        <sequence type="described" ref="VSP_057137"/>
    </isoform>
</comment>
<comment type="tissue specificity">
    <text evidence="13">Expressed in the retina, at higher levels in the photoreceptor layer at the joint between the outer and inner segments.</text>
</comment>
<comment type="disease" evidence="8 10 13">
    <disease id="DI-00915">
        <name>Peroxisome biogenesis disorder complementation group 4</name>
        <acronym>PBD-CG4</acronym>
        <description>A peroxisomal disorder arising from a failure of protein import into the peroxisomal membrane or matrix. The peroxisome biogenesis disorders (PBD group) are genetically heterogeneous with at least 14 distinct genetic groups as concluded from complementation studies. Include disorders are: Zellweger syndrome (ZWS), neonatal adrenoleukodystrophy (NALD), infantile Refsum disease (IRD), and classical rhizomelic chondrodysplasia punctata (RCDP). ZWS, NALD and IRD are distinct from RCDP and constitute a clinical continuum of overlapping phenotypes known as the Zellweger spectrum (PBD-ZSS).</description>
        <dbReference type="MIM" id="614862"/>
    </disease>
    <text>The disease is caused by variants affecting the gene represented in this entry.</text>
</comment>
<comment type="disease" evidence="2 7 16">
    <disease id="DI-03581">
        <name>Peroxisome biogenesis disorder 4A</name>
        <acronym>PBD4A</acronym>
        <description>A fatal peroxisome biogenesis disorder belonging to the Zellweger disease spectrum and clinically characterized by severe neurologic dysfunction with profound psychomotor retardation, severe hypotonia and neonatal seizures, craniofacial abnormalities, liver dysfunction, and biochemically by the absence of peroxisomes. Additional features include cardiovascular and skeletal defects, renal cysts, ocular abnormalities, and hearing impairment. Most severely affected individuals with the classic form of the disease (classic Zellweger syndrome) die within the first year of life.</description>
        <dbReference type="MIM" id="614862"/>
    </disease>
    <text>The disease is caused by variants affecting the gene represented in this entry.</text>
</comment>
<comment type="disease" evidence="3">
    <disease id="DI-03582">
        <name>Peroxisome biogenesis disorder 4B</name>
        <acronym>PBD4B</acronym>
        <description>A peroxisome biogenesis disorder that includes neonatal adrenoleukodystrophy (NALD) and infantile Refsum disease (IRD), two milder manifestations of the Zellweger disease spectrum. The clinical course of patients with the NALD and IRD presentation is variable and may include developmental delay, hypotonia, liver dysfunction, sensorineural hearing loss, retinal dystrophy and vision impairment. Children with the NALD presentation may reach their teens, while patients with the IRD presentation may reach adulthood. The clinical conditions are often slowly progressive in particular with respect to loss of hearing and vision. The biochemical abnormalities include accumulation of phytanic acid, very long chain fatty acids (VLCFA), di- and trihydroxycholestanoic acid and pipecolic acid.</description>
        <dbReference type="MIM" id="614863"/>
    </disease>
    <text>The disease is caused by variants affecting the gene represented in this entry.</text>
</comment>
<comment type="disease" evidence="8 12 14">
    <disease id="DI-04564">
        <name>Heimler syndrome 2</name>
        <acronym>HMLR2</acronym>
        <description>A form of Heimler syndrome, a very mild peroxisome biogenesis disorder characterized by sensorineural hearing loss, amelogenesis imperfecta resulting in enamel hyoplasia of the secondary dentition, nail defects, and occasional or late-onset retinal pigmentation abnormalities.</description>
        <dbReference type="MIM" id="616617"/>
    </disease>
    <text>The disease is caused by variants affecting the gene represented in this entry.</text>
</comment>
<comment type="similarity">
    <text evidence="20">Belongs to the AAA ATPase family.</text>
</comment>
<comment type="online information" name="dbPEX, PEX Gene Database">
    <link uri="https://databases.lovd.nl/shared/genes/PEX6"/>
</comment>
<accession>Q13608</accession>
<accession>Q5T8W1</accession>
<accession>Q8WYQ0</accession>
<accession>Q8WYQ1</accession>
<accession>Q8WYQ2</accession>
<accession>Q99476</accession>
<gene>
    <name evidence="17 21" type="primary">PEX6</name>
    <name evidence="19" type="synonym">PXAAA1</name>
</gene>
<dbReference type="EC" id="3.6.4.-" evidence="6"/>
<dbReference type="EMBL" id="U56602">
    <property type="protein sequence ID" value="AAC50655.1"/>
    <property type="molecule type" value="Genomic_DNA"/>
</dbReference>
<dbReference type="EMBL" id="D83703">
    <property type="protein sequence ID" value="BAA12069.1"/>
    <property type="molecule type" value="mRNA"/>
</dbReference>
<dbReference type="EMBL" id="AF108098">
    <property type="protein sequence ID" value="AAF62564.1"/>
    <property type="molecule type" value="Genomic_DNA"/>
</dbReference>
<dbReference type="EMBL" id="AF108095">
    <property type="protein sequence ID" value="AAF62564.1"/>
    <property type="status" value="JOINED"/>
    <property type="molecule type" value="Genomic_DNA"/>
</dbReference>
<dbReference type="EMBL" id="AF108096">
    <property type="protein sequence ID" value="AAF62564.1"/>
    <property type="status" value="JOINED"/>
    <property type="molecule type" value="Genomic_DNA"/>
</dbReference>
<dbReference type="EMBL" id="AF108097">
    <property type="protein sequence ID" value="AAF62564.1"/>
    <property type="status" value="JOINED"/>
    <property type="molecule type" value="Genomic_DNA"/>
</dbReference>
<dbReference type="EMBL" id="AB051076">
    <property type="protein sequence ID" value="BAB83046.1"/>
    <property type="molecule type" value="mRNA"/>
</dbReference>
<dbReference type="EMBL" id="AB051077">
    <property type="protein sequence ID" value="BAB83047.1"/>
    <property type="molecule type" value="mRNA"/>
</dbReference>
<dbReference type="EMBL" id="AB051078">
    <property type="protein sequence ID" value="BAB83048.1"/>
    <property type="molecule type" value="mRNA"/>
</dbReference>
<dbReference type="EMBL" id="AK314237">
    <property type="protein sequence ID" value="BAG36906.1"/>
    <property type="molecule type" value="mRNA"/>
</dbReference>
<dbReference type="EMBL" id="AL158815">
    <property type="status" value="NOT_ANNOTATED_CDS"/>
    <property type="molecule type" value="Genomic_DNA"/>
</dbReference>
<dbReference type="EMBL" id="CH471081">
    <property type="protein sequence ID" value="EAX04125.1"/>
    <property type="molecule type" value="Genomic_DNA"/>
</dbReference>
<dbReference type="EMBL" id="CH471081">
    <property type="protein sequence ID" value="EAX04128.1"/>
    <property type="molecule type" value="Genomic_DNA"/>
</dbReference>
<dbReference type="EMBL" id="CH471081">
    <property type="protein sequence ID" value="EAX04129.1"/>
    <property type="molecule type" value="Genomic_DNA"/>
</dbReference>
<dbReference type="EMBL" id="BC048331">
    <property type="protein sequence ID" value="AAH48331.1"/>
    <property type="molecule type" value="mRNA"/>
</dbReference>
<dbReference type="CCDS" id="CCDS4877.1">
    <molecule id="Q13608-1"/>
</dbReference>
<dbReference type="PIR" id="S71090">
    <property type="entry name" value="S71090"/>
</dbReference>
<dbReference type="RefSeq" id="NP_000278.3">
    <molecule id="Q13608-1"/>
    <property type="nucleotide sequence ID" value="NM_000287.3"/>
</dbReference>
<dbReference type="RefSeq" id="NP_001303242.1">
    <molecule id="Q13608-3"/>
    <property type="nucleotide sequence ID" value="NM_001316313.2"/>
</dbReference>
<dbReference type="SMR" id="Q13608"/>
<dbReference type="BioGRID" id="111213">
    <property type="interactions" value="129"/>
</dbReference>
<dbReference type="ComplexPortal" id="CPX-8808">
    <property type="entry name" value="Peroxisomal receptor export module complex"/>
</dbReference>
<dbReference type="CORUM" id="Q13608"/>
<dbReference type="FunCoup" id="Q13608">
    <property type="interactions" value="936"/>
</dbReference>
<dbReference type="IntAct" id="Q13608">
    <property type="interactions" value="68"/>
</dbReference>
<dbReference type="MINT" id="Q13608"/>
<dbReference type="STRING" id="9606.ENSP00000303511"/>
<dbReference type="TCDB" id="3.A.20.1.1">
    <property type="family name" value="the peroxisomal protein importer (ppi) family"/>
</dbReference>
<dbReference type="iPTMnet" id="Q13608"/>
<dbReference type="PhosphoSitePlus" id="Q13608"/>
<dbReference type="BioMuta" id="PEX6"/>
<dbReference type="DMDM" id="12644408"/>
<dbReference type="jPOST" id="Q13608"/>
<dbReference type="MassIVE" id="Q13608"/>
<dbReference type="PaxDb" id="9606-ENSP00000303511"/>
<dbReference type="PeptideAtlas" id="Q13608"/>
<dbReference type="ProteomicsDB" id="59595">
    <molecule id="Q13608-1"/>
</dbReference>
<dbReference type="ProteomicsDB" id="75184"/>
<dbReference type="Pumba" id="Q13608"/>
<dbReference type="ABCD" id="Q13608">
    <property type="antibodies" value="1 sequenced antibody"/>
</dbReference>
<dbReference type="Antibodypedia" id="16146">
    <property type="antibodies" value="208 antibodies from 32 providers"/>
</dbReference>
<dbReference type="DNASU" id="5190"/>
<dbReference type="Ensembl" id="ENST00000244546.4">
    <molecule id="Q13608-2"/>
    <property type="protein sequence ID" value="ENSP00000244546.4"/>
    <property type="gene ID" value="ENSG00000124587.14"/>
</dbReference>
<dbReference type="Ensembl" id="ENST00000304611.13">
    <molecule id="Q13608-1"/>
    <property type="protein sequence ID" value="ENSP00000303511.8"/>
    <property type="gene ID" value="ENSG00000124587.14"/>
</dbReference>
<dbReference type="GeneID" id="5190"/>
<dbReference type="KEGG" id="hsa:5190"/>
<dbReference type="MANE-Select" id="ENST00000304611.13">
    <property type="protein sequence ID" value="ENSP00000303511.8"/>
    <property type="RefSeq nucleotide sequence ID" value="NM_000287.4"/>
    <property type="RefSeq protein sequence ID" value="NP_000278.3"/>
</dbReference>
<dbReference type="UCSC" id="uc003otf.4">
    <molecule id="Q13608-1"/>
    <property type="organism name" value="human"/>
</dbReference>
<dbReference type="AGR" id="HGNC:8859"/>
<dbReference type="CTD" id="5190"/>
<dbReference type="DisGeNET" id="5190"/>
<dbReference type="GeneCards" id="PEX6"/>
<dbReference type="GeneReviews" id="PEX6"/>
<dbReference type="HGNC" id="HGNC:8859">
    <property type="gene designation" value="PEX6"/>
</dbReference>
<dbReference type="HPA" id="ENSG00000124587">
    <property type="expression patterns" value="Tissue enhanced (pancreas)"/>
</dbReference>
<dbReference type="MalaCards" id="PEX6"/>
<dbReference type="MIM" id="601498">
    <property type="type" value="gene"/>
</dbReference>
<dbReference type="MIM" id="614862">
    <property type="type" value="phenotype"/>
</dbReference>
<dbReference type="MIM" id="614863">
    <property type="type" value="phenotype"/>
</dbReference>
<dbReference type="MIM" id="616617">
    <property type="type" value="phenotype"/>
</dbReference>
<dbReference type="neXtProt" id="NX_Q13608"/>
<dbReference type="OpenTargets" id="ENSG00000124587"/>
<dbReference type="Orphanet" id="95433">
    <property type="disease" value="Autosomal recessive spinocerebellar ataxia-blindness-deafness syndrome"/>
</dbReference>
<dbReference type="Orphanet" id="3220">
    <property type="disease" value="Deafness-enamel hypoplasia-nail defects syndrome"/>
</dbReference>
<dbReference type="Orphanet" id="772">
    <property type="disease" value="Infantile Refsum disease"/>
</dbReference>
<dbReference type="Orphanet" id="44">
    <property type="disease" value="Neonatal adrenoleukodystrophy"/>
</dbReference>
<dbReference type="Orphanet" id="912">
    <property type="disease" value="Zellweger syndrome"/>
</dbReference>
<dbReference type="PharmGKB" id="PA33201"/>
<dbReference type="VEuPathDB" id="HostDB:ENSG00000124587"/>
<dbReference type="eggNOG" id="KOG0736">
    <property type="taxonomic scope" value="Eukaryota"/>
</dbReference>
<dbReference type="GeneTree" id="ENSGT00550000074953"/>
<dbReference type="HOGENOM" id="CLU_000688_0_8_1"/>
<dbReference type="InParanoid" id="Q13608"/>
<dbReference type="OMA" id="QCKFAAC"/>
<dbReference type="OrthoDB" id="2187at2759"/>
<dbReference type="PAN-GO" id="Q13608">
    <property type="GO annotations" value="4 GO annotations based on evolutionary models"/>
</dbReference>
<dbReference type="PhylomeDB" id="Q13608"/>
<dbReference type="TreeFam" id="TF106428"/>
<dbReference type="BRENDA" id="3.6.4.7">
    <property type="organism ID" value="2681"/>
</dbReference>
<dbReference type="PathwayCommons" id="Q13608"/>
<dbReference type="Reactome" id="R-HSA-9033241">
    <property type="pathway name" value="Peroxisomal protein import"/>
</dbReference>
<dbReference type="SignaLink" id="Q13608"/>
<dbReference type="SIGNOR" id="Q13608"/>
<dbReference type="BioGRID-ORCS" id="5190">
    <property type="hits" value="82 hits in 1166 CRISPR screens"/>
</dbReference>
<dbReference type="ChiTaRS" id="PEX6">
    <property type="organism name" value="human"/>
</dbReference>
<dbReference type="GeneWiki" id="PEX6"/>
<dbReference type="GenomeRNAi" id="5190"/>
<dbReference type="Pharos" id="Q13608">
    <property type="development level" value="Tbio"/>
</dbReference>
<dbReference type="PRO" id="PR:Q13608"/>
<dbReference type="Proteomes" id="UP000005640">
    <property type="component" value="Chromosome 6"/>
</dbReference>
<dbReference type="RNAct" id="Q13608">
    <property type="molecule type" value="protein"/>
</dbReference>
<dbReference type="Bgee" id="ENSG00000124587">
    <property type="expression patterns" value="Expressed in right uterine tube and 144 other cell types or tissues"/>
</dbReference>
<dbReference type="ExpressionAtlas" id="Q13608">
    <property type="expression patterns" value="baseline and differential"/>
</dbReference>
<dbReference type="GO" id="GO:0005737">
    <property type="term" value="C:cytoplasm"/>
    <property type="evidence" value="ECO:0000314"/>
    <property type="project" value="UniProtKB"/>
</dbReference>
<dbReference type="GO" id="GO:0005829">
    <property type="term" value="C:cytosol"/>
    <property type="evidence" value="ECO:0000314"/>
    <property type="project" value="UniProtKB"/>
</dbReference>
<dbReference type="GO" id="GO:0005778">
    <property type="term" value="C:peroxisomal membrane"/>
    <property type="evidence" value="ECO:0000314"/>
    <property type="project" value="UniProtKB"/>
</dbReference>
<dbReference type="GO" id="GO:0005777">
    <property type="term" value="C:peroxisome"/>
    <property type="evidence" value="ECO:0000314"/>
    <property type="project" value="UniProtKB"/>
</dbReference>
<dbReference type="GO" id="GO:0097733">
    <property type="term" value="C:photoreceptor cell cilium"/>
    <property type="evidence" value="ECO:0000314"/>
    <property type="project" value="UniProtKB"/>
</dbReference>
<dbReference type="GO" id="GO:0001750">
    <property type="term" value="C:photoreceptor outer segment"/>
    <property type="evidence" value="ECO:0007669"/>
    <property type="project" value="UniProtKB-SubCell"/>
</dbReference>
<dbReference type="GO" id="GO:0005524">
    <property type="term" value="F:ATP binding"/>
    <property type="evidence" value="ECO:0000315"/>
    <property type="project" value="UniProtKB"/>
</dbReference>
<dbReference type="GO" id="GO:0016887">
    <property type="term" value="F:ATP hydrolysis activity"/>
    <property type="evidence" value="ECO:0000315"/>
    <property type="project" value="UniProtKB"/>
</dbReference>
<dbReference type="GO" id="GO:0140318">
    <property type="term" value="F:protein transporter activity"/>
    <property type="evidence" value="ECO:0000314"/>
    <property type="project" value="UniProtKB"/>
</dbReference>
<dbReference type="GO" id="GO:0044877">
    <property type="term" value="F:protein-containing complex binding"/>
    <property type="evidence" value="ECO:0000314"/>
    <property type="project" value="UniProtKB"/>
</dbReference>
<dbReference type="GO" id="GO:0140036">
    <property type="term" value="F:ubiquitin-modified protein reader activity"/>
    <property type="evidence" value="ECO:0000314"/>
    <property type="project" value="UniProtKB"/>
</dbReference>
<dbReference type="GO" id="GO:0007031">
    <property type="term" value="P:peroxisome organization"/>
    <property type="evidence" value="ECO:0000315"/>
    <property type="project" value="UniProtKB"/>
</dbReference>
<dbReference type="GO" id="GO:0016558">
    <property type="term" value="P:protein import into peroxisome matrix"/>
    <property type="evidence" value="ECO:0000318"/>
    <property type="project" value="GO_Central"/>
</dbReference>
<dbReference type="GO" id="GO:0016562">
    <property type="term" value="P:protein import into peroxisome matrix, receptor recycling"/>
    <property type="evidence" value="ECO:0000314"/>
    <property type="project" value="UniProtKB"/>
</dbReference>
<dbReference type="GO" id="GO:0016561">
    <property type="term" value="P:protein import into peroxisome matrix, translocation"/>
    <property type="evidence" value="ECO:0000315"/>
    <property type="project" value="UniProtKB"/>
</dbReference>
<dbReference type="GO" id="GO:0050821">
    <property type="term" value="P:protein stabilization"/>
    <property type="evidence" value="ECO:0000315"/>
    <property type="project" value="UniProtKB"/>
</dbReference>
<dbReference type="GO" id="GO:0006625">
    <property type="term" value="P:protein targeting to peroxisome"/>
    <property type="evidence" value="ECO:0000315"/>
    <property type="project" value="UniProtKB"/>
</dbReference>
<dbReference type="GO" id="GO:0043335">
    <property type="term" value="P:protein unfolding"/>
    <property type="evidence" value="ECO:0000314"/>
    <property type="project" value="UniProtKB"/>
</dbReference>
<dbReference type="CDD" id="cd19527">
    <property type="entry name" value="RecA-like_PEX6_r2"/>
    <property type="match status" value="1"/>
</dbReference>
<dbReference type="CDD" id="cd19481">
    <property type="entry name" value="RecA-like_protease"/>
    <property type="match status" value="1"/>
</dbReference>
<dbReference type="FunFam" id="3.40.50.300:FF:000109">
    <property type="entry name" value="Peroxisomal biogenesis factor 6"/>
    <property type="match status" value="1"/>
</dbReference>
<dbReference type="FunFam" id="1.10.8.60:FF:000039">
    <property type="entry name" value="peroxisome biogenesis factor 6"/>
    <property type="match status" value="1"/>
</dbReference>
<dbReference type="FunFam" id="1.10.8.60:FF:000059">
    <property type="entry name" value="peroxisome biogenesis factor 6"/>
    <property type="match status" value="1"/>
</dbReference>
<dbReference type="FunFam" id="3.40.50.300:FF:000988">
    <property type="entry name" value="peroxisome biogenesis factor 6"/>
    <property type="match status" value="1"/>
</dbReference>
<dbReference type="Gene3D" id="1.10.8.60">
    <property type="match status" value="2"/>
</dbReference>
<dbReference type="Gene3D" id="3.40.50.300">
    <property type="entry name" value="P-loop containing nucleotide triphosphate hydrolases"/>
    <property type="match status" value="2"/>
</dbReference>
<dbReference type="InterPro" id="IPR003593">
    <property type="entry name" value="AAA+_ATPase"/>
</dbReference>
<dbReference type="InterPro" id="IPR050168">
    <property type="entry name" value="AAA_ATPase_domain"/>
</dbReference>
<dbReference type="InterPro" id="IPR003959">
    <property type="entry name" value="ATPase_AAA_core"/>
</dbReference>
<dbReference type="InterPro" id="IPR003960">
    <property type="entry name" value="ATPase_AAA_CS"/>
</dbReference>
<dbReference type="InterPro" id="IPR027417">
    <property type="entry name" value="P-loop_NTPase"/>
</dbReference>
<dbReference type="InterPro" id="IPR047533">
    <property type="entry name" value="RecA-like_PEX6_r2"/>
</dbReference>
<dbReference type="PANTHER" id="PTHR23077">
    <property type="entry name" value="AAA-FAMILY ATPASE"/>
    <property type="match status" value="1"/>
</dbReference>
<dbReference type="PANTHER" id="PTHR23077:SF9">
    <property type="entry name" value="PEROXISOMAL ATPASE PEX6"/>
    <property type="match status" value="1"/>
</dbReference>
<dbReference type="Pfam" id="PF00004">
    <property type="entry name" value="AAA"/>
    <property type="match status" value="2"/>
</dbReference>
<dbReference type="Pfam" id="PF25395">
    <property type="entry name" value="DPBB_PEX6"/>
    <property type="match status" value="1"/>
</dbReference>
<dbReference type="Pfam" id="PF25394">
    <property type="entry name" value="PEX6_vert_N"/>
    <property type="match status" value="1"/>
</dbReference>
<dbReference type="SMART" id="SM00382">
    <property type="entry name" value="AAA"/>
    <property type="match status" value="2"/>
</dbReference>
<dbReference type="SUPFAM" id="SSF52540">
    <property type="entry name" value="P-loop containing nucleoside triphosphate hydrolases"/>
    <property type="match status" value="2"/>
</dbReference>
<dbReference type="PROSITE" id="PS00674">
    <property type="entry name" value="AAA"/>
    <property type="match status" value="1"/>
</dbReference>
<keyword id="KW-0025">Alternative splicing</keyword>
<keyword id="KW-0986">Amelogenesis imperfecta</keyword>
<keyword id="KW-0067">ATP-binding</keyword>
<keyword id="KW-0966">Cell projection</keyword>
<keyword id="KW-0963">Cytoplasm</keyword>
<keyword id="KW-0209">Deafness</keyword>
<keyword id="KW-0225">Disease variant</keyword>
<keyword id="KW-0378">Hydrolase</keyword>
<keyword id="KW-0472">Membrane</keyword>
<keyword id="KW-0488">Methylation</keyword>
<keyword id="KW-0547">Nucleotide-binding</keyword>
<keyword id="KW-0576">Peroxisome</keyword>
<keyword id="KW-0962">Peroxisome biogenesis</keyword>
<keyword id="KW-0958">Peroxisome biogenesis disorder</keyword>
<keyword id="KW-1267">Proteomics identification</keyword>
<keyword id="KW-1185">Reference proteome</keyword>
<keyword id="KW-0677">Repeat</keyword>
<keyword id="KW-0861">Zellweger syndrome</keyword>
<protein>
    <recommendedName>
        <fullName evidence="20">Peroxisomal ATPase PEX6</fullName>
        <ecNumber evidence="6">3.6.4.-</ecNumber>
    </recommendedName>
    <alternativeName>
        <fullName evidence="20">Peroxin-6</fullName>
    </alternativeName>
    <alternativeName>
        <fullName evidence="20">Peroxisomal biogenesis factor 6</fullName>
    </alternativeName>
    <alternativeName>
        <fullName>Peroxisomal-type ATPase 1</fullName>
    </alternativeName>
    <alternativeName>
        <fullName evidence="19">Peroxisome assembly factor 2</fullName>
        <shortName evidence="19">PAF-2</shortName>
    </alternativeName>
</protein>
<proteinExistence type="evidence at protein level"/>
<name>PEX6_HUMAN</name>
<evidence type="ECO:0000255" key="1"/>
<evidence type="ECO:0000269" key="2">
    <source>
    </source>
</evidence>
<evidence type="ECO:0000269" key="3">
    <source>
    </source>
</evidence>
<evidence type="ECO:0000269" key="4">
    <source>
    </source>
</evidence>
<evidence type="ECO:0000269" key="5">
    <source>
    </source>
</evidence>
<evidence type="ECO:0000269" key="6">
    <source>
    </source>
</evidence>
<evidence type="ECO:0000269" key="7">
    <source>
    </source>
</evidence>
<evidence type="ECO:0000269" key="8">
    <source>
    </source>
</evidence>
<evidence type="ECO:0000269" key="9">
    <source>
    </source>
</evidence>
<evidence type="ECO:0000269" key="10">
    <source>
    </source>
</evidence>
<evidence type="ECO:0000269" key="11">
    <source>
    </source>
</evidence>
<evidence type="ECO:0000269" key="12">
    <source>
    </source>
</evidence>
<evidence type="ECO:0000269" key="13">
    <source>
    </source>
</evidence>
<evidence type="ECO:0000269" key="14">
    <source>
    </source>
</evidence>
<evidence type="ECO:0000269" key="15">
    <source>
    </source>
</evidence>
<evidence type="ECO:0000269" key="16">
    <source>
    </source>
</evidence>
<evidence type="ECO:0000303" key="17">
    <source>
    </source>
</evidence>
<evidence type="ECO:0000303" key="18">
    <source>
    </source>
</evidence>
<evidence type="ECO:0000303" key="19">
    <source>
    </source>
</evidence>
<evidence type="ECO:0000305" key="20"/>
<evidence type="ECO:0000312" key="21">
    <source>
        <dbReference type="HGNC" id="HGNC:8859"/>
    </source>
</evidence>
<evidence type="ECO:0007744" key="22">
    <source>
    </source>
</evidence>
<reference key="1">
    <citation type="journal article" date="1996" name="EMBO J.">
        <title>The peroxisome biogenesis disorder group 4 gene, PXAAA1, encodes a cytoplasmic ATPase required for stability of the PTS1 receptor.</title>
        <authorList>
            <person name="Yahraus T."/>
            <person name="Braverman N."/>
            <person name="Dodt G."/>
            <person name="Kalish J.E."/>
            <person name="Morrell J.C."/>
            <person name="Moser H.W."/>
            <person name="Valle D."/>
            <person name="Gould S.J."/>
        </authorList>
    </citation>
    <scope>NUCLEOTIDE SEQUENCE [GENOMIC DNA]</scope>
    <scope>INVOLVEMENT IN PBD4A</scope>
</reference>
<reference key="2">
    <citation type="journal article" date="1996" name="Am. J. Hum. Genet.">
        <title>Human peroxisome assembly factor-2 (PAF-2): a gene responsible for group C peroxisome biogenesis disorder in humans.</title>
        <authorList>
            <person name="Fukuda S."/>
            <person name="Shimozawa N."/>
            <person name="Suzuki Y."/>
            <person name="Zhang Z."/>
            <person name="Tomatsu S."/>
            <person name="Tsukamoto T."/>
            <person name="Hashiguchi N."/>
            <person name="Osumi T."/>
            <person name="Masuno M."/>
            <person name="Imaizumi K."/>
            <person name="Kuroki Y."/>
            <person name="Fujiki Y."/>
            <person name="Orii T."/>
            <person name="Kondo N."/>
        </authorList>
    </citation>
    <scope>NUCLEOTIDE SEQUENCE [MRNA] (ISOFORM 1)</scope>
</reference>
<reference key="3">
    <citation type="journal article" date="1999" name="Hum. Mutat.">
        <title>Genomic structure and identification of 11 novel mutations of the PEX6 'peroxisome assembly factor-2' gene in patients with peroxisome biogenesis disorders.</title>
        <authorList>
            <person name="Zhang Z."/>
            <person name="Suzuki Y."/>
            <person name="Shimozawa N."/>
            <person name="Fukuda S."/>
            <person name="Imamura A."/>
            <person name="Tsukamoto T."/>
            <person name="Osumi T."/>
            <person name="Fujiki Y."/>
            <person name="Orii T."/>
            <person name="Wanders R.J.A."/>
            <person name="Barth P.G."/>
            <person name="Moser H.W."/>
            <person name="Paton B.C."/>
            <person name="Besley G.T."/>
            <person name="Kondo N."/>
        </authorList>
    </citation>
    <scope>NUCLEOTIDE SEQUENCE [GENOMIC DNA]</scope>
    <scope>VARIANTS PBD4A GLN-812 AND TRP-812</scope>
</reference>
<reference key="4">
    <citation type="journal article" date="2001" name="J. Hum. Genet.">
        <title>The peroxin Pex6p gene is impaired in peroxisomal biogenesis disorders of complementation group 6.</title>
        <authorList>
            <person name="Matsumoto N."/>
            <person name="Tamura S."/>
            <person name="Moser A."/>
            <person name="Moser H.W."/>
            <person name="Braverman N."/>
            <person name="Suzuki Y."/>
            <person name="Shimozawa N."/>
            <person name="Kondo N."/>
            <person name="Fujiki Y."/>
        </authorList>
    </citation>
    <scope>NUCLEOTIDE SEQUENCE [MRNA] (ISOFORMS 1; 2 AND 3)</scope>
    <scope>SUBCELLULAR LOCATION</scope>
    <scope>VARIANT GLN-939</scope>
    <scope>INVOLVEMENT IN PBD4B</scope>
    <scope>ALTERNATIVE SPLICING</scope>
</reference>
<reference key="5">
    <citation type="journal article" date="2004" name="Nat. Genet.">
        <title>Complete sequencing and characterization of 21,243 full-length human cDNAs.</title>
        <authorList>
            <person name="Ota T."/>
            <person name="Suzuki Y."/>
            <person name="Nishikawa T."/>
            <person name="Otsuki T."/>
            <person name="Sugiyama T."/>
            <person name="Irie R."/>
            <person name="Wakamatsu A."/>
            <person name="Hayashi K."/>
            <person name="Sato H."/>
            <person name="Nagai K."/>
            <person name="Kimura K."/>
            <person name="Makita H."/>
            <person name="Sekine M."/>
            <person name="Obayashi M."/>
            <person name="Nishi T."/>
            <person name="Shibahara T."/>
            <person name="Tanaka T."/>
            <person name="Ishii S."/>
            <person name="Yamamoto J."/>
            <person name="Saito K."/>
            <person name="Kawai Y."/>
            <person name="Isono Y."/>
            <person name="Nakamura Y."/>
            <person name="Nagahari K."/>
            <person name="Murakami K."/>
            <person name="Yasuda T."/>
            <person name="Iwayanagi T."/>
            <person name="Wagatsuma M."/>
            <person name="Shiratori A."/>
            <person name="Sudo H."/>
            <person name="Hosoiri T."/>
            <person name="Kaku Y."/>
            <person name="Kodaira H."/>
            <person name="Kondo H."/>
            <person name="Sugawara M."/>
            <person name="Takahashi M."/>
            <person name="Kanda K."/>
            <person name="Yokoi T."/>
            <person name="Furuya T."/>
            <person name="Kikkawa E."/>
            <person name="Omura Y."/>
            <person name="Abe K."/>
            <person name="Kamihara K."/>
            <person name="Katsuta N."/>
            <person name="Sato K."/>
            <person name="Tanikawa M."/>
            <person name="Yamazaki M."/>
            <person name="Ninomiya K."/>
            <person name="Ishibashi T."/>
            <person name="Yamashita H."/>
            <person name="Murakawa K."/>
            <person name="Fujimori K."/>
            <person name="Tanai H."/>
            <person name="Kimata M."/>
            <person name="Watanabe M."/>
            <person name="Hiraoka S."/>
            <person name="Chiba Y."/>
            <person name="Ishida S."/>
            <person name="Ono Y."/>
            <person name="Takiguchi S."/>
            <person name="Watanabe S."/>
            <person name="Yosida M."/>
            <person name="Hotuta T."/>
            <person name="Kusano J."/>
            <person name="Kanehori K."/>
            <person name="Takahashi-Fujii A."/>
            <person name="Hara H."/>
            <person name="Tanase T.-O."/>
            <person name="Nomura Y."/>
            <person name="Togiya S."/>
            <person name="Komai F."/>
            <person name="Hara R."/>
            <person name="Takeuchi K."/>
            <person name="Arita M."/>
            <person name="Imose N."/>
            <person name="Musashino K."/>
            <person name="Yuuki H."/>
            <person name="Oshima A."/>
            <person name="Sasaki N."/>
            <person name="Aotsuka S."/>
            <person name="Yoshikawa Y."/>
            <person name="Matsunawa H."/>
            <person name="Ichihara T."/>
            <person name="Shiohata N."/>
            <person name="Sano S."/>
            <person name="Moriya S."/>
            <person name="Momiyama H."/>
            <person name="Satoh N."/>
            <person name="Takami S."/>
            <person name="Terashima Y."/>
            <person name="Suzuki O."/>
            <person name="Nakagawa S."/>
            <person name="Senoh A."/>
            <person name="Mizoguchi H."/>
            <person name="Goto Y."/>
            <person name="Shimizu F."/>
            <person name="Wakebe H."/>
            <person name="Hishigaki H."/>
            <person name="Watanabe T."/>
            <person name="Sugiyama A."/>
            <person name="Takemoto M."/>
            <person name="Kawakami B."/>
            <person name="Yamazaki M."/>
            <person name="Watanabe K."/>
            <person name="Kumagai A."/>
            <person name="Itakura S."/>
            <person name="Fukuzumi Y."/>
            <person name="Fujimori Y."/>
            <person name="Komiyama M."/>
            <person name="Tashiro H."/>
            <person name="Tanigami A."/>
            <person name="Fujiwara T."/>
            <person name="Ono T."/>
            <person name="Yamada K."/>
            <person name="Fujii Y."/>
            <person name="Ozaki K."/>
            <person name="Hirao M."/>
            <person name="Ohmori Y."/>
            <person name="Kawabata A."/>
            <person name="Hikiji T."/>
            <person name="Kobatake N."/>
            <person name="Inagaki H."/>
            <person name="Ikema Y."/>
            <person name="Okamoto S."/>
            <person name="Okitani R."/>
            <person name="Kawakami T."/>
            <person name="Noguchi S."/>
            <person name="Itoh T."/>
            <person name="Shigeta K."/>
            <person name="Senba T."/>
            <person name="Matsumura K."/>
            <person name="Nakajima Y."/>
            <person name="Mizuno T."/>
            <person name="Morinaga M."/>
            <person name="Sasaki M."/>
            <person name="Togashi T."/>
            <person name="Oyama M."/>
            <person name="Hata H."/>
            <person name="Watanabe M."/>
            <person name="Komatsu T."/>
            <person name="Mizushima-Sugano J."/>
            <person name="Satoh T."/>
            <person name="Shirai Y."/>
            <person name="Takahashi Y."/>
            <person name="Nakagawa K."/>
            <person name="Okumura K."/>
            <person name="Nagase T."/>
            <person name="Nomura N."/>
            <person name="Kikuchi H."/>
            <person name="Masuho Y."/>
            <person name="Yamashita R."/>
            <person name="Nakai K."/>
            <person name="Yada T."/>
            <person name="Nakamura Y."/>
            <person name="Ohara O."/>
            <person name="Isogai T."/>
            <person name="Sugano S."/>
        </authorList>
    </citation>
    <scope>NUCLEOTIDE SEQUENCE [LARGE SCALE MRNA] (ISOFORM 1)</scope>
    <source>
        <tissue>Synovium</tissue>
    </source>
</reference>
<reference key="6">
    <citation type="journal article" date="2003" name="Nature">
        <title>The DNA sequence and analysis of human chromosome 6.</title>
        <authorList>
            <person name="Mungall A.J."/>
            <person name="Palmer S.A."/>
            <person name="Sims S.K."/>
            <person name="Edwards C.A."/>
            <person name="Ashurst J.L."/>
            <person name="Wilming L."/>
            <person name="Jones M.C."/>
            <person name="Horton R."/>
            <person name="Hunt S.E."/>
            <person name="Scott C.E."/>
            <person name="Gilbert J.G.R."/>
            <person name="Clamp M.E."/>
            <person name="Bethel G."/>
            <person name="Milne S."/>
            <person name="Ainscough R."/>
            <person name="Almeida J.P."/>
            <person name="Ambrose K.D."/>
            <person name="Andrews T.D."/>
            <person name="Ashwell R.I.S."/>
            <person name="Babbage A.K."/>
            <person name="Bagguley C.L."/>
            <person name="Bailey J."/>
            <person name="Banerjee R."/>
            <person name="Barker D.J."/>
            <person name="Barlow K.F."/>
            <person name="Bates K."/>
            <person name="Beare D.M."/>
            <person name="Beasley H."/>
            <person name="Beasley O."/>
            <person name="Bird C.P."/>
            <person name="Blakey S.E."/>
            <person name="Bray-Allen S."/>
            <person name="Brook J."/>
            <person name="Brown A.J."/>
            <person name="Brown J.Y."/>
            <person name="Burford D.C."/>
            <person name="Burrill W."/>
            <person name="Burton J."/>
            <person name="Carder C."/>
            <person name="Carter N.P."/>
            <person name="Chapman J.C."/>
            <person name="Clark S.Y."/>
            <person name="Clark G."/>
            <person name="Clee C.M."/>
            <person name="Clegg S."/>
            <person name="Cobley V."/>
            <person name="Collier R.E."/>
            <person name="Collins J.E."/>
            <person name="Colman L.K."/>
            <person name="Corby N.R."/>
            <person name="Coville G.J."/>
            <person name="Culley K.M."/>
            <person name="Dhami P."/>
            <person name="Davies J."/>
            <person name="Dunn M."/>
            <person name="Earthrowl M.E."/>
            <person name="Ellington A.E."/>
            <person name="Evans K.A."/>
            <person name="Faulkner L."/>
            <person name="Francis M.D."/>
            <person name="Frankish A."/>
            <person name="Frankland J."/>
            <person name="French L."/>
            <person name="Garner P."/>
            <person name="Garnett J."/>
            <person name="Ghori M.J."/>
            <person name="Gilby L.M."/>
            <person name="Gillson C.J."/>
            <person name="Glithero R.J."/>
            <person name="Grafham D.V."/>
            <person name="Grant M."/>
            <person name="Gribble S."/>
            <person name="Griffiths C."/>
            <person name="Griffiths M.N.D."/>
            <person name="Hall R."/>
            <person name="Halls K.S."/>
            <person name="Hammond S."/>
            <person name="Harley J.L."/>
            <person name="Hart E.A."/>
            <person name="Heath P.D."/>
            <person name="Heathcott R."/>
            <person name="Holmes S.J."/>
            <person name="Howden P.J."/>
            <person name="Howe K.L."/>
            <person name="Howell G.R."/>
            <person name="Huckle E."/>
            <person name="Humphray S.J."/>
            <person name="Humphries M.D."/>
            <person name="Hunt A.R."/>
            <person name="Johnson C.M."/>
            <person name="Joy A.A."/>
            <person name="Kay M."/>
            <person name="Keenan S.J."/>
            <person name="Kimberley A.M."/>
            <person name="King A."/>
            <person name="Laird G.K."/>
            <person name="Langford C."/>
            <person name="Lawlor S."/>
            <person name="Leongamornlert D.A."/>
            <person name="Leversha M."/>
            <person name="Lloyd C.R."/>
            <person name="Lloyd D.M."/>
            <person name="Loveland J.E."/>
            <person name="Lovell J."/>
            <person name="Martin S."/>
            <person name="Mashreghi-Mohammadi M."/>
            <person name="Maslen G.L."/>
            <person name="Matthews L."/>
            <person name="McCann O.T."/>
            <person name="McLaren S.J."/>
            <person name="McLay K."/>
            <person name="McMurray A."/>
            <person name="Moore M.J.F."/>
            <person name="Mullikin J.C."/>
            <person name="Niblett D."/>
            <person name="Nickerson T."/>
            <person name="Novik K.L."/>
            <person name="Oliver K."/>
            <person name="Overton-Larty E.K."/>
            <person name="Parker A."/>
            <person name="Patel R."/>
            <person name="Pearce A.V."/>
            <person name="Peck A.I."/>
            <person name="Phillimore B.J.C.T."/>
            <person name="Phillips S."/>
            <person name="Plumb R.W."/>
            <person name="Porter K.M."/>
            <person name="Ramsey Y."/>
            <person name="Ranby S.A."/>
            <person name="Rice C.M."/>
            <person name="Ross M.T."/>
            <person name="Searle S.M."/>
            <person name="Sehra H.K."/>
            <person name="Sheridan E."/>
            <person name="Skuce C.D."/>
            <person name="Smith S."/>
            <person name="Smith M."/>
            <person name="Spraggon L."/>
            <person name="Squares S.L."/>
            <person name="Steward C.A."/>
            <person name="Sycamore N."/>
            <person name="Tamlyn-Hall G."/>
            <person name="Tester J."/>
            <person name="Theaker A.J."/>
            <person name="Thomas D.W."/>
            <person name="Thorpe A."/>
            <person name="Tracey A."/>
            <person name="Tromans A."/>
            <person name="Tubby B."/>
            <person name="Wall M."/>
            <person name="Wallis J.M."/>
            <person name="West A.P."/>
            <person name="White S.S."/>
            <person name="Whitehead S.L."/>
            <person name="Whittaker H."/>
            <person name="Wild A."/>
            <person name="Willey D.J."/>
            <person name="Wilmer T.E."/>
            <person name="Wood J.M."/>
            <person name="Wray P.W."/>
            <person name="Wyatt J.C."/>
            <person name="Young L."/>
            <person name="Younger R.M."/>
            <person name="Bentley D.R."/>
            <person name="Coulson A."/>
            <person name="Durbin R.M."/>
            <person name="Hubbard T."/>
            <person name="Sulston J.E."/>
            <person name="Dunham I."/>
            <person name="Rogers J."/>
            <person name="Beck S."/>
        </authorList>
    </citation>
    <scope>NUCLEOTIDE SEQUENCE [LARGE SCALE GENOMIC DNA]</scope>
</reference>
<reference key="7">
    <citation type="submission" date="2005-07" db="EMBL/GenBank/DDBJ databases">
        <authorList>
            <person name="Mural R.J."/>
            <person name="Istrail S."/>
            <person name="Sutton G."/>
            <person name="Florea L."/>
            <person name="Halpern A.L."/>
            <person name="Mobarry C.M."/>
            <person name="Lippert R."/>
            <person name="Walenz B."/>
            <person name="Shatkay H."/>
            <person name="Dew I."/>
            <person name="Miller J.R."/>
            <person name="Flanigan M.J."/>
            <person name="Edwards N.J."/>
            <person name="Bolanos R."/>
            <person name="Fasulo D."/>
            <person name="Halldorsson B.V."/>
            <person name="Hannenhalli S."/>
            <person name="Turner R."/>
            <person name="Yooseph S."/>
            <person name="Lu F."/>
            <person name="Nusskern D.R."/>
            <person name="Shue B.C."/>
            <person name="Zheng X.H."/>
            <person name="Zhong F."/>
            <person name="Delcher A.L."/>
            <person name="Huson D.H."/>
            <person name="Kravitz S.A."/>
            <person name="Mouchard L."/>
            <person name="Reinert K."/>
            <person name="Remington K.A."/>
            <person name="Clark A.G."/>
            <person name="Waterman M.S."/>
            <person name="Eichler E.E."/>
            <person name="Adams M.D."/>
            <person name="Hunkapiller M.W."/>
            <person name="Myers E.W."/>
            <person name="Venter J.C."/>
        </authorList>
    </citation>
    <scope>NUCLEOTIDE SEQUENCE [LARGE SCALE GENOMIC DNA]</scope>
</reference>
<reference key="8">
    <citation type="journal article" date="2004" name="Genome Res.">
        <title>The status, quality, and expansion of the NIH full-length cDNA project: the Mammalian Gene Collection (MGC).</title>
        <authorList>
            <consortium name="The MGC Project Team"/>
        </authorList>
    </citation>
    <scope>NUCLEOTIDE SEQUENCE [LARGE SCALE MRNA] (ISOFORM 1)</scope>
    <source>
        <tissue>Colon</tissue>
    </source>
</reference>
<reference key="9">
    <citation type="journal article" date="2003" name="Nat. Cell Biol.">
        <title>The pathogenic peroxin Pex26p recruits the Pex1p-Pex6p AAA ATPase complexes to peroxisomes.</title>
        <authorList>
            <person name="Matsumoto N."/>
            <person name="Tamura S."/>
            <person name="Fujiki Y."/>
        </authorList>
    </citation>
    <scope>INTERACTION WITH PEX26 AND PEX1</scope>
</reference>
<reference key="10">
    <citation type="journal article" date="2005" name="Mol. Cell. Biol.">
        <title>Shuttling mechanism of peroxisome targeting signal type 1 receptor Pex5: ATP-independent import and ATP-dependent export.</title>
        <authorList>
            <person name="Miyata N."/>
            <person name="Fujiki Y."/>
        </authorList>
    </citation>
    <scope>FUNCTION</scope>
</reference>
<reference key="11">
    <citation type="journal article" date="2006" name="J. Biol. Chem.">
        <title>Dynamic and functional assembly of the AAA peroxins, Pex1p and Pex6p, and their membrane receptor Pex26p.</title>
        <authorList>
            <person name="Tamura S."/>
            <person name="Yasutake S."/>
            <person name="Matsumoto N."/>
            <person name="Fujiki Y."/>
        </authorList>
    </citation>
    <scope>FUNCTION</scope>
    <scope>CATALYTIC ACTIVITY</scope>
    <scope>SUBCELLULAR LOCATION</scope>
    <scope>INTERACTION WITH PEX1 AND PEX26</scope>
    <scope>MUTAGENESIS OF LYS-476; ASP-532; LYS-750 AND ASP-803</scope>
</reference>
<reference key="12">
    <citation type="journal article" date="2011" name="Traffic">
        <title>Recruiting mechanism of the AAA peroxins, Pex1p and Pex6p, to Pex26p on the peroxisomal membrane.</title>
        <authorList>
            <person name="Nashiro C."/>
            <person name="Kashiwagi A."/>
            <person name="Matsuzaki T."/>
            <person name="Tamura S."/>
            <person name="Fujiki Y."/>
        </authorList>
    </citation>
    <scope>FUNCTION</scope>
    <scope>SUBCELLULAR LOCATION</scope>
    <scope>INTERACTION WITH PEX1 AND PEX26</scope>
    <scope>MUTAGENESIS OF LYS-476; ASP-532; LYS-750 AND ASP-803</scope>
</reference>
<reference key="13">
    <citation type="journal article" date="2018" name="J. Biol. Chem.">
        <title>Peroxisomal monoubiquitinated PEX5 interacts with the AAA ATPases PEX1 and PEX6 and is unfolded during its dislocation into the cytosol.</title>
        <authorList>
            <person name="Pedrosa A.G."/>
            <person name="Francisco T."/>
            <person name="Bicho D."/>
            <person name="Dias A.F."/>
            <person name="Barros-Barbosa A."/>
            <person name="Hagmann V."/>
            <person name="Dodt G."/>
            <person name="Rodrigues T.A."/>
            <person name="Azevedo J.E."/>
        </authorList>
    </citation>
    <scope>FUNCTION</scope>
</reference>
<reference key="14">
    <citation type="journal article" date="2009" name="Hum. Mutat.">
        <title>Identification of novel mutations and sequence variation in the Zellweger syndrome spectrum of peroxisome biogenesis disorders.</title>
        <authorList>
            <person name="Yik W.Y."/>
            <person name="Steinberg S.J."/>
            <person name="Moser A.B."/>
            <person name="Moser H.W."/>
            <person name="Hacia J.G."/>
        </authorList>
    </citation>
    <scope>INVOLVEMENT IN PBD-CG4</scope>
    <scope>INVOLVEMENT IN HMLR2</scope>
    <scope>VARIANTS PBD-CG4 THR-849; GLN-860 AND TRP-860</scope>
    <scope>VARIANTS HMLR2 LEU-274 AND GLN-601</scope>
    <scope>VARIANTS PRO-79; VAL-809; ILE-882; SER-924 AND GLN-939</scope>
</reference>
<reference key="15">
    <citation type="journal article" date="2011" name="Nature">
        <title>Deep sequencing reveals 50 novel genes for recessive cognitive disorders.</title>
        <authorList>
            <person name="Najmabadi H."/>
            <person name="Hu H."/>
            <person name="Garshasbi M."/>
            <person name="Zemojtel T."/>
            <person name="Abedini S.S."/>
            <person name="Chen W."/>
            <person name="Hosseini M."/>
            <person name="Behjati F."/>
            <person name="Haas S."/>
            <person name="Jamali P."/>
            <person name="Zecha A."/>
            <person name="Mohseni M."/>
            <person name="Puettmann L."/>
            <person name="Vahid L.N."/>
            <person name="Jensen C."/>
            <person name="Moheb L.A."/>
            <person name="Bienek M."/>
            <person name="Larti F."/>
            <person name="Mueller I."/>
            <person name="Weissmann R."/>
            <person name="Darvish H."/>
            <person name="Wrogemann K."/>
            <person name="Hadavi V."/>
            <person name="Lipkowitz B."/>
            <person name="Esmaeeli-Nieh S."/>
            <person name="Wieczorek D."/>
            <person name="Kariminejad R."/>
            <person name="Firouzabadi S.G."/>
            <person name="Cohen M."/>
            <person name="Fattahi Z."/>
            <person name="Rost I."/>
            <person name="Mojahedi F."/>
            <person name="Hertzberg C."/>
            <person name="Dehghan A."/>
            <person name="Rajab A."/>
            <person name="Banavandi M.J."/>
            <person name="Hoffer J."/>
            <person name="Falah M."/>
            <person name="Musante L."/>
            <person name="Kalscheuer V."/>
            <person name="Ullmann R."/>
            <person name="Kuss A.W."/>
            <person name="Tzschach A."/>
            <person name="Kahrizi K."/>
            <person name="Ropers H.H."/>
        </authorList>
    </citation>
    <scope>INVOLVEMENT IN PBD-CG4</scope>
    <scope>VARIANT PBD-CG4 PRO-534</scope>
</reference>
<reference key="16">
    <citation type="journal article" date="2012" name="Traffic">
        <title>AWP1/ZFAND6 functions in Pex5 export by interacting with cys-monoubiquitinated Pex5 and Pex6 AAA ATPase.</title>
        <authorList>
            <person name="Miyata N."/>
            <person name="Okumoto K."/>
            <person name="Mukai S."/>
            <person name="Noguchi M."/>
            <person name="Fujiki Y."/>
        </authorList>
    </citation>
    <scope>INTERACTION WITH ZFAND6</scope>
</reference>
<reference key="17">
    <citation type="journal article" date="2014" name="Mol. Cell. Proteomics">
        <title>Immunoaffinity enrichment and mass spectrometry analysis of protein methylation.</title>
        <authorList>
            <person name="Guo A."/>
            <person name="Gu H."/>
            <person name="Zhou J."/>
            <person name="Mulhern D."/>
            <person name="Wang Y."/>
            <person name="Lee K.A."/>
            <person name="Yang V."/>
            <person name="Aguiar M."/>
            <person name="Kornhauser J."/>
            <person name="Jia X."/>
            <person name="Ren J."/>
            <person name="Beausoleil S.A."/>
            <person name="Silva J.C."/>
            <person name="Vemulapalli V."/>
            <person name="Bedford M.T."/>
            <person name="Comb M.J."/>
        </authorList>
    </citation>
    <scope>METHYLATION [LARGE SCALE ANALYSIS] AT ARG-119</scope>
    <scope>IDENTIFICATION BY MASS SPECTROMETRY [LARGE SCALE ANALYSIS]</scope>
    <source>
        <tissue>Colon carcinoma</tissue>
    </source>
</reference>
<reference key="18">
    <citation type="journal article" date="2006" name="Hum. Mutat.">
        <title>Identification of novel mutations in PEX2, PEX6, PEX10, PEX12, and PEX13 in Zellweger spectrum patients.</title>
        <authorList>
            <person name="Krause C."/>
            <person name="Rosewich H."/>
            <person name="Thanos M."/>
            <person name="Gaertner J."/>
        </authorList>
    </citation>
    <scope>INVOLVEMENT IN PBD4A</scope>
</reference>
<reference key="19">
    <citation type="journal article" date="2015" name="Am. J. Hum. Genet.">
        <title>Heimler syndrome is caused by hypomorphic mutations in the peroxisome-biogenesis genes PEX1 and PEX6.</title>
        <authorList>
            <person name="Ratbi I."/>
            <person name="Falkenberg K.D."/>
            <person name="Sommen M."/>
            <person name="Al-Sheqaih N."/>
            <person name="Guaoua S."/>
            <person name="Vandeweyer G."/>
            <person name="Urquhart J.E."/>
            <person name="Chandler K.E."/>
            <person name="Williams S.G."/>
            <person name="Roberts N.A."/>
            <person name="El Alloussi M."/>
            <person name="Black G.C."/>
            <person name="Ferdinandusse S."/>
            <person name="Ramdi H."/>
            <person name="Heimler A."/>
            <person name="Fryer A."/>
            <person name="Lynch S.A."/>
            <person name="Cooper N."/>
            <person name="Ong K.R."/>
            <person name="Smith C.E."/>
            <person name="Inglehearn C.F."/>
            <person name="Mighell A.J."/>
            <person name="Elcock C."/>
            <person name="Poulter J.A."/>
            <person name="Tischkowitz M."/>
            <person name="Davies S.J."/>
            <person name="Sefiani A."/>
            <person name="Mironov A.A."/>
            <person name="Newman W.G."/>
            <person name="Waterham H.R."/>
            <person name="Van Camp G."/>
        </authorList>
    </citation>
    <scope>INVOLVEMENT IN HMLR2</scope>
    <scope>VARIANTS HMLR2 LEU-274; GLN-601 AND TRP-644</scope>
    <scope>CHARACTERIZATION OF VARIANTS HMLR2 LEU-274; GLN-601 AND TRP-644</scope>
</reference>
<reference key="20">
    <citation type="journal article" date="2016" name="Hum. Mutat.">
        <title>PEX6 is expressed in photoreceptor cilia and mutated in deafblindness with enamel dysplasia and microcephaly.</title>
        <authorList>
            <person name="Zaki M.S."/>
            <person name="Heller R."/>
            <person name="Thoenes M."/>
            <person name="Nuernberg G."/>
            <person name="Stern-Schneider G."/>
            <person name="Nuernberg P."/>
            <person name="Karnati S."/>
            <person name="Swan D."/>
            <person name="Fateen E."/>
            <person name="Nagel-Wolfrum K."/>
            <person name="Mostafa M.I."/>
            <person name="Thiele H."/>
            <person name="Wolfrum U."/>
            <person name="Baumgart-Vogt E."/>
            <person name="Bolz H.J."/>
        </authorList>
    </citation>
    <scope>TISSUE SPECIFICITY</scope>
    <scope>SUBCELLULAR LOCATION</scope>
    <scope>VARIANT PBD-CG4 VAL-413</scope>
</reference>
<reference key="21">
    <citation type="journal article" date="2016" name="Eur. J. Hum. Genet.">
        <title>Spectrum of PEX1 and PEX6 variants in Heimler syndrome.</title>
        <authorList>
            <person name="Smith C.E."/>
            <person name="Poulter J.A."/>
            <person name="Levin A.V."/>
            <person name="Capasso J.E."/>
            <person name="Price S."/>
            <person name="Ben-Yosef T."/>
            <person name="Sharony R."/>
            <person name="Newman W.G."/>
            <person name="Shore R.C."/>
            <person name="Brookes S.J."/>
            <person name="Mighell A.J."/>
            <person name="Inglehearn C.F."/>
        </authorList>
    </citation>
    <scope>VARIANTS HMLR2 GLY-92; LEU-99; LEU-218; ILE-572; GLN-601 AND PHE-905</scope>
</reference>
<organism>
    <name type="scientific">Homo sapiens</name>
    <name type="common">Human</name>
    <dbReference type="NCBI Taxonomy" id="9606"/>
    <lineage>
        <taxon>Eukaryota</taxon>
        <taxon>Metazoa</taxon>
        <taxon>Chordata</taxon>
        <taxon>Craniata</taxon>
        <taxon>Vertebrata</taxon>
        <taxon>Euteleostomi</taxon>
        <taxon>Mammalia</taxon>
        <taxon>Eutheria</taxon>
        <taxon>Euarchontoglires</taxon>
        <taxon>Primates</taxon>
        <taxon>Haplorrhini</taxon>
        <taxon>Catarrhini</taxon>
        <taxon>Hominidae</taxon>
        <taxon>Homo</taxon>
    </lineage>
</organism>
<feature type="chain" id="PRO_0000084607" description="Peroxisomal ATPase PEX6">
    <location>
        <begin position="1"/>
        <end position="980"/>
    </location>
</feature>
<feature type="binding site" evidence="1">
    <location>
        <begin position="470"/>
        <end position="477"/>
    </location>
    <ligand>
        <name>ATP</name>
        <dbReference type="ChEBI" id="CHEBI:30616"/>
    </ligand>
</feature>
<feature type="binding site" evidence="1">
    <location>
        <begin position="744"/>
        <end position="751"/>
    </location>
    <ligand>
        <name>ATP</name>
        <dbReference type="ChEBI" id="CHEBI:30616"/>
    </ligand>
</feature>
<feature type="modified residue" description="Omega-N-methylarginine" evidence="22">
    <location>
        <position position="119"/>
    </location>
</feature>
<feature type="splice variant" id="VSP_057137" description="In isoform 3." evidence="18">
    <location>
        <begin position="207"/>
        <end position="294"/>
    </location>
</feature>
<feature type="splice variant" id="VSP_057138" description="In isoform 2." evidence="18">
    <original>IPSVSWHDVGGLQEVKKEILETIQLPLEHPELLSLGLRRS</original>
    <variation>VETKSLECLPGPGLQLHALSSLMNWTLWPQAGGEVEILEE</variation>
    <location>
        <begin position="699"/>
        <end position="738"/>
    </location>
</feature>
<feature type="splice variant" id="VSP_057139" description="In isoform 2." evidence="18">
    <location>
        <begin position="739"/>
        <end position="980"/>
    </location>
</feature>
<feature type="sequence variant" id="VAR_058381" description="In dbSNP:rs61752141." evidence="8">
    <original>A</original>
    <variation>P</variation>
    <location>
        <position position="79"/>
    </location>
</feature>
<feature type="sequence variant" id="VAR_077505" description="In HMLR2; uncertain significance; dbSNP:rs886037780." evidence="14">
    <original>V</original>
    <variation>G</variation>
    <location>
        <position position="92"/>
    </location>
</feature>
<feature type="sequence variant" id="VAR_077506" description="In HMLR2; uncertain significance; dbSNP:rs886037781." evidence="14">
    <original>R</original>
    <variation>L</variation>
    <location>
        <position position="99"/>
    </location>
</feature>
<feature type="sequence variant" id="VAR_077507" description="In HMLR2; uncertain significance; dbSNP:rs886037779." evidence="14">
    <original>F</original>
    <variation>L</variation>
    <location>
        <position position="218"/>
    </location>
</feature>
<feature type="sequence variant" id="VAR_058382" description="In HMLR2; results in severe functional decrease in peroxisome biogenesis; dbSNP:rs61753219." evidence="8 12">
    <original>P</original>
    <variation>L</variation>
    <location>
        <position position="274"/>
    </location>
</feature>
<feature type="sequence variant" id="VAR_077508" description="In PBD-CG4; disease phenotype includes hearing loss, visual impairment, enamel dysplasia microcephaly with deep white matter changes and developmental delay; dbSNP:rs1554127531." evidence="13">
    <original>G</original>
    <variation>V</variation>
    <location>
        <position position="413"/>
    </location>
</feature>
<feature type="sequence variant" id="VAR_075872" description="In PBD-CG4; dbSNP:rs387906809." evidence="10">
    <original>L</original>
    <variation>P</variation>
    <location>
        <position position="534"/>
    </location>
</feature>
<feature type="sequence variant" id="VAR_077509" description="In HMLR2; dbSNP:rs61753224." evidence="14">
    <original>T</original>
    <variation>I</variation>
    <location>
        <position position="572"/>
    </location>
</feature>
<feature type="sequence variant" id="VAR_058383" description="In HMLR2; uncertain significance; results in mild functional decrease in peroxisome biogenesis; dbSNP:rs34324426." evidence="8 12 14">
    <original>R</original>
    <variation>Q</variation>
    <location>
        <position position="601"/>
    </location>
</feature>
<feature type="sequence variant" id="VAR_074110" description="In HMLR2; results in mild functional decrease in peroxisome biogenesis; dbSNP:rs769896492." evidence="12">
    <original>R</original>
    <variation>W</variation>
    <location>
        <position position="644"/>
    </location>
</feature>
<feature type="sequence variant" id="VAR_048114" description="In dbSNP:rs35830695." evidence="8">
    <original>A</original>
    <variation>V</variation>
    <location>
        <position position="809"/>
    </location>
</feature>
<feature type="sequence variant" id="VAR_007918" description="In PBD4A; dbSNP:rs61753229." evidence="2">
    <original>R</original>
    <variation>Q</variation>
    <location>
        <position position="812"/>
    </location>
</feature>
<feature type="sequence variant" id="VAR_007919" description="In PBD4A; atypical; dbSNP:rs61753228." evidence="2">
    <original>R</original>
    <variation>W</variation>
    <location>
        <position position="812"/>
    </location>
</feature>
<feature type="sequence variant" id="VAR_058384" description="In PBD-CG4; dbSNP:rs267608244." evidence="8">
    <original>N</original>
    <variation>T</variation>
    <location>
        <position position="849"/>
    </location>
</feature>
<feature type="sequence variant" id="VAR_058385" description="In PBD-CG4; dbSNP:rs61753231." evidence="8">
    <original>R</original>
    <variation>Q</variation>
    <location>
        <position position="860"/>
    </location>
</feature>
<feature type="sequence variant" id="VAR_058386" description="In PBD-CG4; dbSNP:rs61753230." evidence="8">
    <original>R</original>
    <variation>W</variation>
    <location>
        <position position="860"/>
    </location>
</feature>
<feature type="sequence variant" id="VAR_048115" description="In dbSNP:rs2274516." evidence="8">
    <original>V</original>
    <variation>I</variation>
    <location>
        <position position="882"/>
    </location>
</feature>
<feature type="sequence variant" id="VAR_077510" description="In HMLR2; dbSNP:rs886037782." evidence="14">
    <original>C</original>
    <variation>F</variation>
    <location>
        <position position="905"/>
    </location>
</feature>
<feature type="sequence variant" id="VAR_058387" description="In dbSNP:rs34551839." evidence="8">
    <original>A</original>
    <variation>S</variation>
    <location>
        <position position="924"/>
    </location>
</feature>
<feature type="sequence variant" id="VAR_048116" description="In dbSNP:rs1129187." evidence="3 8">
    <original>P</original>
    <variation>Q</variation>
    <location>
        <position position="939"/>
    </location>
</feature>
<feature type="mutagenesis site" description="In A1 mutant; abolished ATP-binding; decreased interaction with PEX1 or PEX26." evidence="6 9">
    <original>K</original>
    <variation>E</variation>
    <location>
        <position position="476"/>
    </location>
</feature>
<feature type="mutagenesis site" description="In B1 mutant; abolished ATP hydrolysis; does not affect interaction with PEX6 or PEX26." evidence="6 9">
    <original>D</original>
    <variation>N</variation>
    <location>
        <position position="532"/>
    </location>
</feature>
<feature type="mutagenesis site" description="In A2 mutant; abolished ATP-binding; decreased interaction with PEX1 or PEX26." evidence="6 9">
    <original>K</original>
    <variation>E</variation>
    <location>
        <position position="750"/>
    </location>
</feature>
<feature type="mutagenesis site" description="In B2 mutant; does not affect interaction with PEX6 or PEX26." evidence="6 9">
    <original>D</original>
    <variation>N</variation>
    <location>
        <position position="803"/>
    </location>
</feature>
<feature type="sequence conflict" description="In Ref. 1; AAC50655." evidence="20" ref="1">
    <original>S</original>
    <variation>N</variation>
    <location>
        <position position="77"/>
    </location>
</feature>
<sequence>MALAVLRVLEPFPTETPPLAVLLPPGGPWPAAELGLVLALRPAGESPAGPALLVAALEGPDAGTEEQGPGPPQLLVSRALLRLLALGSGAWVRARAVRRPPALGWALLGTSLGPGLGPRVGPLLVRRGETLPVPGPRVLETRPALQGLLGPGTRLAVTELRGRARLCPESGDSSRPPPPPVVSSFAVSGTVRRLQGVLGGTGDSLGVSRSCLRGLGLFQGEWVWVAQARESSNTSQPHLARVQVLEPRWDLSDRLGPGSGPLGEPLADGLALVPATLAFNLGCDPLEMGELRIQRYLEGSIAPEDKGSCSLLPGPPFARELHIEIVSSPHYSTNGNYDGVLYRHFQIPRVVQEGDVLCVPTIGQVEILEGSPEKLPRWREMFFKVKKTVGEAPDGPASAYLADTTHTSLYMVGSTLSPVPWLPSEESTLWSSLSPPGLEALVSELCAVLKPRLQPGGALLTGTSSVLLRGPPGCGKTTVVAAACSHLGLHLLKVPCSSLCAESSGAVETKLQAIFSRARRCRPAVLLLTAVDLLGRDRDGLGEDARVMAVLRHLLLNEDPLNSCPPLMVVATTSRAQDLPADVQTAFPHELEVPALSEGQRLSILRALTAHLPLGQEVNLAQLARRCAGFVVGDLYALLTHSSRAACTRIKNSGLAGGLTEEDEGELCAAGFPLLAEDFGQALEQLQTAHSQAVGAPKIPSVSWHDVGGLQEVKKEILETIQLPLEHPELLSLGLRRSGLLLHGPPGTGKTLLAKAVATECSLTFLSVKGPELINMYVGQSEENVREVFARARAAAPCIIFFDELDSLAPSRGRSGDSGGVMDRVVSQLLAELDGLHSTQDVFVIGATNRPDLLDPALLRPGRFDKLVFVGANEDRASQLRVLSAITRKFKLEPSVSLVNVLDCCPPQLTGADLYSLCSDAMTAALKRRVHDLEEGLEPGSSALMLTMEDLLQAAARLQPSVSEQELLRYKRIQRKFAAC</sequence>